<comment type="function">
    <text evidence="1">Catalyzes the attachment of tyrosine to tRNA(Tyr) in a two-step reaction: tyrosine is first activated by ATP to form Tyr-AMP and then transferred to the acceptor end of tRNA(Tyr).</text>
</comment>
<comment type="catalytic activity">
    <reaction evidence="1">
        <text>tRNA(Tyr) + L-tyrosine + ATP = L-tyrosyl-tRNA(Tyr) + AMP + diphosphate + H(+)</text>
        <dbReference type="Rhea" id="RHEA:10220"/>
        <dbReference type="Rhea" id="RHEA-COMP:9706"/>
        <dbReference type="Rhea" id="RHEA-COMP:9707"/>
        <dbReference type="ChEBI" id="CHEBI:15378"/>
        <dbReference type="ChEBI" id="CHEBI:30616"/>
        <dbReference type="ChEBI" id="CHEBI:33019"/>
        <dbReference type="ChEBI" id="CHEBI:58315"/>
        <dbReference type="ChEBI" id="CHEBI:78442"/>
        <dbReference type="ChEBI" id="CHEBI:78536"/>
        <dbReference type="ChEBI" id="CHEBI:456215"/>
        <dbReference type="EC" id="6.1.1.1"/>
    </reaction>
</comment>
<comment type="subunit">
    <text evidence="1">Homodimer.</text>
</comment>
<comment type="subcellular location">
    <subcellularLocation>
        <location evidence="1">Cytoplasm</location>
    </subcellularLocation>
</comment>
<comment type="similarity">
    <text evidence="1">Belongs to the class-I aminoacyl-tRNA synthetase family. TyrS type 1 subfamily.</text>
</comment>
<accession>A0LUB6</accession>
<dbReference type="EC" id="6.1.1.1" evidence="1"/>
<dbReference type="EMBL" id="CP000481">
    <property type="protein sequence ID" value="ABK53026.1"/>
    <property type="molecule type" value="Genomic_DNA"/>
</dbReference>
<dbReference type="RefSeq" id="WP_011720089.1">
    <property type="nucleotide sequence ID" value="NC_008578.1"/>
</dbReference>
<dbReference type="SMR" id="A0LUB6"/>
<dbReference type="FunCoup" id="A0LUB6">
    <property type="interactions" value="378"/>
</dbReference>
<dbReference type="STRING" id="351607.Acel_1254"/>
<dbReference type="KEGG" id="ace:Acel_1254"/>
<dbReference type="eggNOG" id="COG0162">
    <property type="taxonomic scope" value="Bacteria"/>
</dbReference>
<dbReference type="HOGENOM" id="CLU_024003_0_2_11"/>
<dbReference type="InParanoid" id="A0LUB6"/>
<dbReference type="OrthoDB" id="9804243at2"/>
<dbReference type="Proteomes" id="UP000008221">
    <property type="component" value="Chromosome"/>
</dbReference>
<dbReference type="GO" id="GO:0005829">
    <property type="term" value="C:cytosol"/>
    <property type="evidence" value="ECO:0007669"/>
    <property type="project" value="TreeGrafter"/>
</dbReference>
<dbReference type="GO" id="GO:0005524">
    <property type="term" value="F:ATP binding"/>
    <property type="evidence" value="ECO:0007669"/>
    <property type="project" value="UniProtKB-UniRule"/>
</dbReference>
<dbReference type="GO" id="GO:0003723">
    <property type="term" value="F:RNA binding"/>
    <property type="evidence" value="ECO:0007669"/>
    <property type="project" value="UniProtKB-KW"/>
</dbReference>
<dbReference type="GO" id="GO:0004831">
    <property type="term" value="F:tyrosine-tRNA ligase activity"/>
    <property type="evidence" value="ECO:0007669"/>
    <property type="project" value="UniProtKB-UniRule"/>
</dbReference>
<dbReference type="GO" id="GO:0006437">
    <property type="term" value="P:tyrosyl-tRNA aminoacylation"/>
    <property type="evidence" value="ECO:0007669"/>
    <property type="project" value="UniProtKB-UniRule"/>
</dbReference>
<dbReference type="CDD" id="cd00165">
    <property type="entry name" value="S4"/>
    <property type="match status" value="1"/>
</dbReference>
<dbReference type="CDD" id="cd00805">
    <property type="entry name" value="TyrRS_core"/>
    <property type="match status" value="1"/>
</dbReference>
<dbReference type="FunFam" id="1.10.240.10:FF:000001">
    <property type="entry name" value="Tyrosine--tRNA ligase"/>
    <property type="match status" value="1"/>
</dbReference>
<dbReference type="FunFam" id="3.40.50.620:FF:000008">
    <property type="entry name" value="Tyrosine--tRNA ligase"/>
    <property type="match status" value="1"/>
</dbReference>
<dbReference type="Gene3D" id="3.40.50.620">
    <property type="entry name" value="HUPs"/>
    <property type="match status" value="1"/>
</dbReference>
<dbReference type="Gene3D" id="3.10.290.10">
    <property type="entry name" value="RNA-binding S4 domain"/>
    <property type="match status" value="1"/>
</dbReference>
<dbReference type="Gene3D" id="1.10.240.10">
    <property type="entry name" value="Tyrosyl-Transfer RNA Synthetase"/>
    <property type="match status" value="1"/>
</dbReference>
<dbReference type="HAMAP" id="MF_02006">
    <property type="entry name" value="Tyr_tRNA_synth_type1"/>
    <property type="match status" value="1"/>
</dbReference>
<dbReference type="InterPro" id="IPR001412">
    <property type="entry name" value="aa-tRNA-synth_I_CS"/>
</dbReference>
<dbReference type="InterPro" id="IPR002305">
    <property type="entry name" value="aa-tRNA-synth_Ic"/>
</dbReference>
<dbReference type="InterPro" id="IPR014729">
    <property type="entry name" value="Rossmann-like_a/b/a_fold"/>
</dbReference>
<dbReference type="InterPro" id="IPR002942">
    <property type="entry name" value="S4_RNA-bd"/>
</dbReference>
<dbReference type="InterPro" id="IPR036986">
    <property type="entry name" value="S4_RNA-bd_sf"/>
</dbReference>
<dbReference type="InterPro" id="IPR054608">
    <property type="entry name" value="SYY-like_C"/>
</dbReference>
<dbReference type="InterPro" id="IPR002307">
    <property type="entry name" value="Tyr-tRNA-ligase"/>
</dbReference>
<dbReference type="InterPro" id="IPR024088">
    <property type="entry name" value="Tyr-tRNA-ligase_bac-type"/>
</dbReference>
<dbReference type="InterPro" id="IPR024107">
    <property type="entry name" value="Tyr-tRNA-ligase_bac_1"/>
</dbReference>
<dbReference type="NCBIfam" id="TIGR00234">
    <property type="entry name" value="tyrS"/>
    <property type="match status" value="1"/>
</dbReference>
<dbReference type="PANTHER" id="PTHR11766:SF0">
    <property type="entry name" value="TYROSINE--TRNA LIGASE, MITOCHONDRIAL"/>
    <property type="match status" value="1"/>
</dbReference>
<dbReference type="PANTHER" id="PTHR11766">
    <property type="entry name" value="TYROSYL-TRNA SYNTHETASE"/>
    <property type="match status" value="1"/>
</dbReference>
<dbReference type="Pfam" id="PF22421">
    <property type="entry name" value="SYY_C-terminal"/>
    <property type="match status" value="1"/>
</dbReference>
<dbReference type="Pfam" id="PF00579">
    <property type="entry name" value="tRNA-synt_1b"/>
    <property type="match status" value="1"/>
</dbReference>
<dbReference type="PRINTS" id="PR01040">
    <property type="entry name" value="TRNASYNTHTYR"/>
</dbReference>
<dbReference type="SMART" id="SM00363">
    <property type="entry name" value="S4"/>
    <property type="match status" value="1"/>
</dbReference>
<dbReference type="SUPFAM" id="SSF55174">
    <property type="entry name" value="Alpha-L RNA-binding motif"/>
    <property type="match status" value="1"/>
</dbReference>
<dbReference type="SUPFAM" id="SSF52374">
    <property type="entry name" value="Nucleotidylyl transferase"/>
    <property type="match status" value="1"/>
</dbReference>
<dbReference type="PROSITE" id="PS00178">
    <property type="entry name" value="AA_TRNA_LIGASE_I"/>
    <property type="match status" value="1"/>
</dbReference>
<dbReference type="PROSITE" id="PS50889">
    <property type="entry name" value="S4"/>
    <property type="match status" value="1"/>
</dbReference>
<sequence length="426" mass="46247">MTHLLDDLAWRGLIAQSTDLEALRAAMNTGPITVYCGFDPTAPSLHIGHLVQILTLRRFQDAGHRPIALVGGATGLIGDPSGRTTERALNDPDVVAGWAERIHRQLAPFLDFTGERAGQPAIAVNNLEWTGRLTAIEFLRDVGKHFRVGRMLAKEVVAARLRSEQGISYTEFSYQILQSLDFLELYRRYRCVLQIGGIDQWGNLTSGIELIHKVEGVDVHALATPLVTKADGTKFGKTAGGAVWLDPALTSPYAFYQFWINTDDRDVPAYLRYFSLKNKDELEALEKDAGRDPAARLGQRALAEELTTLVHGATECGKVVAASAALFGRGELAGVEPETLAAALAEAGLVTMPFDPPPRVVDALVATGLVESRSAARRVISEGGAYVNNEKVTDVDAQIDPGRLLHGRWAVIRRGRRAVAGVERAG</sequence>
<feature type="chain" id="PRO_1000088573" description="Tyrosine--tRNA ligase">
    <location>
        <begin position="1"/>
        <end position="426"/>
    </location>
</feature>
<feature type="domain" description="S4 RNA-binding" evidence="1">
    <location>
        <begin position="358"/>
        <end position="418"/>
    </location>
</feature>
<feature type="short sequence motif" description="'HIGH' region">
    <location>
        <begin position="40"/>
        <end position="49"/>
    </location>
</feature>
<feature type="short sequence motif" description="'KMSKS' region">
    <location>
        <begin position="234"/>
        <end position="238"/>
    </location>
</feature>
<feature type="binding site" evidence="1">
    <location>
        <position position="35"/>
    </location>
    <ligand>
        <name>L-tyrosine</name>
        <dbReference type="ChEBI" id="CHEBI:58315"/>
    </ligand>
</feature>
<feature type="binding site" evidence="1">
    <location>
        <position position="174"/>
    </location>
    <ligand>
        <name>L-tyrosine</name>
        <dbReference type="ChEBI" id="CHEBI:58315"/>
    </ligand>
</feature>
<feature type="binding site" evidence="1">
    <location>
        <position position="178"/>
    </location>
    <ligand>
        <name>L-tyrosine</name>
        <dbReference type="ChEBI" id="CHEBI:58315"/>
    </ligand>
</feature>
<feature type="binding site" evidence="1">
    <location>
        <position position="237"/>
    </location>
    <ligand>
        <name>ATP</name>
        <dbReference type="ChEBI" id="CHEBI:30616"/>
    </ligand>
</feature>
<keyword id="KW-0030">Aminoacyl-tRNA synthetase</keyword>
<keyword id="KW-0067">ATP-binding</keyword>
<keyword id="KW-0963">Cytoplasm</keyword>
<keyword id="KW-0436">Ligase</keyword>
<keyword id="KW-0547">Nucleotide-binding</keyword>
<keyword id="KW-0648">Protein biosynthesis</keyword>
<keyword id="KW-1185">Reference proteome</keyword>
<keyword id="KW-0694">RNA-binding</keyword>
<name>SYY_ACIC1</name>
<proteinExistence type="inferred from homology"/>
<protein>
    <recommendedName>
        <fullName evidence="1">Tyrosine--tRNA ligase</fullName>
        <ecNumber evidence="1">6.1.1.1</ecNumber>
    </recommendedName>
    <alternativeName>
        <fullName evidence="1">Tyrosyl-tRNA synthetase</fullName>
        <shortName evidence="1">TyrRS</shortName>
    </alternativeName>
</protein>
<evidence type="ECO:0000255" key="1">
    <source>
        <dbReference type="HAMAP-Rule" id="MF_02006"/>
    </source>
</evidence>
<reference key="1">
    <citation type="journal article" date="2009" name="Genome Res.">
        <title>Complete genome of the cellulolytic thermophile Acidothermus cellulolyticus 11B provides insights into its ecophysiological and evolutionary adaptations.</title>
        <authorList>
            <person name="Barabote R.D."/>
            <person name="Xie G."/>
            <person name="Leu D.H."/>
            <person name="Normand P."/>
            <person name="Necsulea A."/>
            <person name="Daubin V."/>
            <person name="Medigue C."/>
            <person name="Adney W.S."/>
            <person name="Xu X.C."/>
            <person name="Lapidus A."/>
            <person name="Parales R.E."/>
            <person name="Detter C."/>
            <person name="Pujic P."/>
            <person name="Bruce D."/>
            <person name="Lavire C."/>
            <person name="Challacombe J.F."/>
            <person name="Brettin T.S."/>
            <person name="Berry A.M."/>
        </authorList>
    </citation>
    <scope>NUCLEOTIDE SEQUENCE [LARGE SCALE GENOMIC DNA]</scope>
    <source>
        <strain>ATCC 43068 / DSM 8971 / 11B</strain>
    </source>
</reference>
<organism>
    <name type="scientific">Acidothermus cellulolyticus (strain ATCC 43068 / DSM 8971 / 11B)</name>
    <dbReference type="NCBI Taxonomy" id="351607"/>
    <lineage>
        <taxon>Bacteria</taxon>
        <taxon>Bacillati</taxon>
        <taxon>Actinomycetota</taxon>
        <taxon>Actinomycetes</taxon>
        <taxon>Acidothermales</taxon>
        <taxon>Acidothermaceae</taxon>
        <taxon>Acidothermus</taxon>
    </lineage>
</organism>
<gene>
    <name evidence="1" type="primary">tyrS</name>
    <name type="ordered locus">Acel_1254</name>
</gene>